<dbReference type="EMBL" id="BA000028">
    <property type="protein sequence ID" value="BAC13477.1"/>
    <property type="molecule type" value="Genomic_DNA"/>
</dbReference>
<dbReference type="RefSeq" id="WP_011065921.1">
    <property type="nucleotide sequence ID" value="NC_004193.1"/>
</dbReference>
<dbReference type="SMR" id="Q8ER10"/>
<dbReference type="STRING" id="221109.gene:10733761"/>
<dbReference type="KEGG" id="oih:OB1521"/>
<dbReference type="eggNOG" id="COG1349">
    <property type="taxonomic scope" value="Bacteria"/>
</dbReference>
<dbReference type="HOGENOM" id="CLU_095708_0_0_9"/>
<dbReference type="OrthoDB" id="1706183at2"/>
<dbReference type="PhylomeDB" id="Q8ER10"/>
<dbReference type="Proteomes" id="UP000000822">
    <property type="component" value="Chromosome"/>
</dbReference>
<dbReference type="GO" id="GO:0003677">
    <property type="term" value="F:DNA binding"/>
    <property type="evidence" value="ECO:0007669"/>
    <property type="project" value="UniProtKB-KW"/>
</dbReference>
<dbReference type="GO" id="GO:0003700">
    <property type="term" value="F:DNA-binding transcription factor activity"/>
    <property type="evidence" value="ECO:0007669"/>
    <property type="project" value="UniProtKB-UniRule"/>
</dbReference>
<dbReference type="GO" id="GO:0006633">
    <property type="term" value="P:fatty acid biosynthetic process"/>
    <property type="evidence" value="ECO:0007669"/>
    <property type="project" value="UniProtKB-KW"/>
</dbReference>
<dbReference type="GO" id="GO:0045892">
    <property type="term" value="P:negative regulation of DNA-templated transcription"/>
    <property type="evidence" value="ECO:0007669"/>
    <property type="project" value="UniProtKB-UniRule"/>
</dbReference>
<dbReference type="GO" id="GO:0045717">
    <property type="term" value="P:negative regulation of fatty acid biosynthetic process"/>
    <property type="evidence" value="ECO:0007669"/>
    <property type="project" value="UniProtKB-UniRule"/>
</dbReference>
<dbReference type="CDD" id="cd03440">
    <property type="entry name" value="hot_dog"/>
    <property type="match status" value="1"/>
</dbReference>
<dbReference type="Gene3D" id="3.10.129.10">
    <property type="entry name" value="Hotdog Thioesterase"/>
    <property type="match status" value="1"/>
</dbReference>
<dbReference type="Gene3D" id="1.10.10.10">
    <property type="entry name" value="Winged helix-like DNA-binding domain superfamily/Winged helix DNA-binding domain"/>
    <property type="match status" value="1"/>
</dbReference>
<dbReference type="HAMAP" id="MF_01814">
    <property type="entry name" value="Transcrip_fact_FapR"/>
    <property type="match status" value="1"/>
</dbReference>
<dbReference type="InterPro" id="IPR029069">
    <property type="entry name" value="HotDog_dom_sf"/>
</dbReference>
<dbReference type="InterPro" id="IPR017275">
    <property type="entry name" value="Transcription_factor_FapR"/>
</dbReference>
<dbReference type="InterPro" id="IPR036388">
    <property type="entry name" value="WH-like_DNA-bd_sf"/>
</dbReference>
<dbReference type="NCBIfam" id="NF003359">
    <property type="entry name" value="PRK04424.1"/>
    <property type="match status" value="1"/>
</dbReference>
<dbReference type="PIRSF" id="PIRSF037733">
    <property type="entry name" value="Transcription_factor_FapR"/>
    <property type="match status" value="1"/>
</dbReference>
<dbReference type="SUPFAM" id="SSF54637">
    <property type="entry name" value="Thioesterase/thiol ester dehydrase-isomerase"/>
    <property type="match status" value="1"/>
</dbReference>
<protein>
    <recommendedName>
        <fullName evidence="1">Transcription factor FapR</fullName>
    </recommendedName>
    <alternativeName>
        <fullName evidence="1">Fatty acid and phospholipid biosynthesis regulator</fullName>
    </alternativeName>
</protein>
<evidence type="ECO:0000255" key="1">
    <source>
        <dbReference type="HAMAP-Rule" id="MF_01814"/>
    </source>
</evidence>
<proteinExistence type="inferred from homology"/>
<accession>Q8ER10</accession>
<comment type="function">
    <text evidence="1">Transcriptional factor involved in regulation of membrane lipid biosynthesis by repressing genes involved in fatty acid and phospholipid metabolism.</text>
</comment>
<comment type="similarity">
    <text evidence="1">Belongs to the FapR family.</text>
</comment>
<reference key="1">
    <citation type="journal article" date="2002" name="Nucleic Acids Res.">
        <title>Genome sequence of Oceanobacillus iheyensis isolated from the Iheya Ridge and its unexpected adaptive capabilities to extreme environments.</title>
        <authorList>
            <person name="Takami H."/>
            <person name="Takaki Y."/>
            <person name="Uchiyama I."/>
        </authorList>
    </citation>
    <scope>NUCLEOTIDE SEQUENCE [LARGE SCALE GENOMIC DNA]</scope>
    <source>
        <strain>DSM 14371 / CIP 107618 / JCM 11309 / KCTC 3954 / HTE831</strain>
    </source>
</reference>
<keyword id="KW-0238">DNA-binding</keyword>
<keyword id="KW-0275">Fatty acid biosynthesis</keyword>
<keyword id="KW-0276">Fatty acid metabolism</keyword>
<keyword id="KW-0444">Lipid biosynthesis</keyword>
<keyword id="KW-0443">Lipid metabolism</keyword>
<keyword id="KW-1185">Reference proteome</keyword>
<keyword id="KW-0678">Repressor</keyword>
<keyword id="KW-0804">Transcription</keyword>
<keyword id="KW-0805">Transcription regulation</keyword>
<gene>
    <name evidence="1" type="primary">fapR</name>
    <name type="ordered locus">OB1521</name>
</gene>
<sequence>MKRSKVERQSMLKEKIELTPFVTDEQLAKEFHVSIQTIRLDRMELAIPELRERIKHVATNQWNETVKALPLEEVIGEVIDLELDERAISIMDITPDLVFSRNKIARGHHIFAQANSLAVAVINDELALTAKSNLKFTRQVNEGERVIAKAIVKGKDNRDRTIVEVSSYVENELVFTGEFFMFHSSNEKGEN</sequence>
<feature type="chain" id="PRO_0000172826" description="Transcription factor FapR">
    <location>
        <begin position="1"/>
        <end position="191"/>
    </location>
</feature>
<name>FAPR_OCEIH</name>
<organism>
    <name type="scientific">Oceanobacillus iheyensis (strain DSM 14371 / CIP 107618 / JCM 11309 / KCTC 3954 / HTE831)</name>
    <dbReference type="NCBI Taxonomy" id="221109"/>
    <lineage>
        <taxon>Bacteria</taxon>
        <taxon>Bacillati</taxon>
        <taxon>Bacillota</taxon>
        <taxon>Bacilli</taxon>
        <taxon>Bacillales</taxon>
        <taxon>Bacillaceae</taxon>
        <taxon>Oceanobacillus</taxon>
    </lineage>
</organism>